<reference key="1">
    <citation type="journal article" date="2003" name="Comp. Biochem. Physiol.">
        <title>Cuticular proteins from the horseshoe crab, Limulus polyphemus.</title>
        <authorList>
            <person name="Ditzel N."/>
            <person name="Andersen S.O."/>
            <person name="Hoejrup P."/>
        </authorList>
    </citation>
    <scope>PROTEIN SEQUENCE</scope>
    <scope>MASS SPECTROMETRY</scope>
    <source>
        <tissue>Carapace cuticle</tissue>
    </source>
</reference>
<evidence type="ECO:0000269" key="1">
    <source>
    </source>
</evidence>
<evidence type="ECO:0000305" key="2"/>
<sequence length="70" mass="8011">VVLHRPGYYYPGYYYGLGMSTQYRNGDTIQNYNFQYDEDHLAGGSYRREHGTGYGNVKVGSYGLRDADGR</sequence>
<organism evidence="2">
    <name type="scientific">Limulus polyphemus</name>
    <name type="common">Atlantic horseshoe crab</name>
    <dbReference type="NCBI Taxonomy" id="6850"/>
    <lineage>
        <taxon>Eukaryota</taxon>
        <taxon>Metazoa</taxon>
        <taxon>Ecdysozoa</taxon>
        <taxon>Arthropoda</taxon>
        <taxon>Chelicerata</taxon>
        <taxon>Merostomata</taxon>
        <taxon>Xiphosura</taxon>
        <taxon>Limulidae</taxon>
        <taxon>Limulus</taxon>
    </lineage>
</organism>
<accession>P83356</accession>
<feature type="chain" id="PRO_0000196180" description="Cuticle protein 16 isoform b">
    <location>
        <begin position="1"/>
        <end position="70" status="greater than"/>
    </location>
</feature>
<feature type="non-terminal residue">
    <location>
        <position position="70"/>
    </location>
</feature>
<name>CU16B_LIMPO</name>
<dbReference type="OrthoDB" id="7345025at2759"/>
<dbReference type="Proteomes" id="UP000694941">
    <property type="component" value="Unplaced"/>
</dbReference>
<dbReference type="GO" id="GO:0042302">
    <property type="term" value="F:structural constituent of cuticle"/>
    <property type="evidence" value="ECO:0007669"/>
    <property type="project" value="UniProtKB-KW"/>
</dbReference>
<proteinExistence type="evidence at protein level"/>
<protein>
    <recommendedName>
        <fullName>Cuticle protein 16 isoform b</fullName>
    </recommendedName>
    <alternativeName>
        <fullName>LpCP16b</fullName>
    </alternativeName>
</protein>
<keyword id="KW-0193">Cuticle</keyword>
<keyword id="KW-0903">Direct protein sequencing</keyword>
<comment type="mass spectrometry" mass="15783.0" method="MALDI" evidence="1"/>